<evidence type="ECO:0000250" key="1">
    <source>
        <dbReference type="UniProtKB" id="Q8L9J7"/>
    </source>
</evidence>
<evidence type="ECO:0000255" key="2"/>
<evidence type="ECO:0000269" key="3">
    <source>
    </source>
</evidence>
<evidence type="ECO:0000269" key="4">
    <source>
    </source>
</evidence>
<evidence type="ECO:0000269" key="5">
    <source>
    </source>
</evidence>
<evidence type="ECO:0000303" key="6">
    <source>
    </source>
</evidence>
<evidence type="ECO:0000303" key="7">
    <source>
    </source>
</evidence>
<evidence type="ECO:0000305" key="8"/>
<reference key="1">
    <citation type="journal article" date="2000" name="DNA Res.">
        <title>Structural analysis of Arabidopsis thaliana chromosome 3. I. Sequence features of the regions of 4,504,864 bp covered by sixty P1 and TAC clones.</title>
        <authorList>
            <person name="Sato S."/>
            <person name="Nakamura Y."/>
            <person name="Kaneko T."/>
            <person name="Katoh T."/>
            <person name="Asamizu E."/>
            <person name="Tabata S."/>
        </authorList>
    </citation>
    <scope>NUCLEOTIDE SEQUENCE [LARGE SCALE GENOMIC DNA]</scope>
    <source>
        <strain>cv. Columbia</strain>
    </source>
</reference>
<reference key="2">
    <citation type="journal article" date="2017" name="Plant J.">
        <title>Araport11: a complete reannotation of the Arabidopsis thaliana reference genome.</title>
        <authorList>
            <person name="Cheng C.Y."/>
            <person name="Krishnakumar V."/>
            <person name="Chan A.P."/>
            <person name="Thibaud-Nissen F."/>
            <person name="Schobel S."/>
            <person name="Town C.D."/>
        </authorList>
    </citation>
    <scope>GENOME REANNOTATION</scope>
    <source>
        <strain>cv. Columbia</strain>
    </source>
</reference>
<reference key="3">
    <citation type="journal article" date="2003" name="Science">
        <title>Empirical analysis of transcriptional activity in the Arabidopsis genome.</title>
        <authorList>
            <person name="Yamada K."/>
            <person name="Lim J."/>
            <person name="Dale J.M."/>
            <person name="Chen H."/>
            <person name="Shinn P."/>
            <person name="Palm C.J."/>
            <person name="Southwick A.M."/>
            <person name="Wu H.C."/>
            <person name="Kim C.J."/>
            <person name="Nguyen M."/>
            <person name="Pham P.K."/>
            <person name="Cheuk R.F."/>
            <person name="Karlin-Newmann G."/>
            <person name="Liu S.X."/>
            <person name="Lam B."/>
            <person name="Sakano H."/>
            <person name="Wu T."/>
            <person name="Yu G."/>
            <person name="Miranda M."/>
            <person name="Quach H.L."/>
            <person name="Tripp M."/>
            <person name="Chang C.H."/>
            <person name="Lee J.M."/>
            <person name="Toriumi M.J."/>
            <person name="Chan M.M."/>
            <person name="Tang C.C."/>
            <person name="Onodera C.S."/>
            <person name="Deng J.M."/>
            <person name="Akiyama K."/>
            <person name="Ansari Y."/>
            <person name="Arakawa T."/>
            <person name="Banh J."/>
            <person name="Banno F."/>
            <person name="Bowser L."/>
            <person name="Brooks S.Y."/>
            <person name="Carninci P."/>
            <person name="Chao Q."/>
            <person name="Choy N."/>
            <person name="Enju A."/>
            <person name="Goldsmith A.D."/>
            <person name="Gurjal M."/>
            <person name="Hansen N.F."/>
            <person name="Hayashizaki Y."/>
            <person name="Johnson-Hopson C."/>
            <person name="Hsuan V.W."/>
            <person name="Iida K."/>
            <person name="Karnes M."/>
            <person name="Khan S."/>
            <person name="Koesema E."/>
            <person name="Ishida J."/>
            <person name="Jiang P.X."/>
            <person name="Jones T."/>
            <person name="Kawai J."/>
            <person name="Kamiya A."/>
            <person name="Meyers C."/>
            <person name="Nakajima M."/>
            <person name="Narusaka M."/>
            <person name="Seki M."/>
            <person name="Sakurai T."/>
            <person name="Satou M."/>
            <person name="Tamse R."/>
            <person name="Vaysberg M."/>
            <person name="Wallender E.K."/>
            <person name="Wong C."/>
            <person name="Yamamura Y."/>
            <person name="Yuan S."/>
            <person name="Shinozaki K."/>
            <person name="Davis R.W."/>
            <person name="Theologis A."/>
            <person name="Ecker J.R."/>
        </authorList>
    </citation>
    <scope>NUCLEOTIDE SEQUENCE [LARGE SCALE MRNA]</scope>
    <source>
        <strain>cv. Columbia</strain>
    </source>
</reference>
<reference key="4">
    <citation type="submission" date="2005-03" db="EMBL/GenBank/DDBJ databases">
        <title>Large-scale analysis of RIKEN Arabidopsis full-length (RAFL) cDNAs.</title>
        <authorList>
            <person name="Totoki Y."/>
            <person name="Seki M."/>
            <person name="Ishida J."/>
            <person name="Nakajima M."/>
            <person name="Enju A."/>
            <person name="Kamiya A."/>
            <person name="Narusaka M."/>
            <person name="Shin-i T."/>
            <person name="Nakagawa M."/>
            <person name="Sakamoto N."/>
            <person name="Oishi K."/>
            <person name="Kohara Y."/>
            <person name="Kobayashi M."/>
            <person name="Toyoda A."/>
            <person name="Sakaki Y."/>
            <person name="Sakurai T."/>
            <person name="Iida K."/>
            <person name="Akiyama K."/>
            <person name="Satou M."/>
            <person name="Toyoda T."/>
            <person name="Konagaya A."/>
            <person name="Carninci P."/>
            <person name="Kawai J."/>
            <person name="Hayashizaki Y."/>
            <person name="Shinozaki K."/>
        </authorList>
    </citation>
    <scope>NUCLEOTIDE SEQUENCE [LARGE SCALE MRNA]</scope>
    <source>
        <strain>cv. Columbia</strain>
    </source>
</reference>
<reference key="5">
    <citation type="journal article" date="2010" name="Nature">
        <title>Sugar transporters for intercellular exchange and nutrition of pathogens.</title>
        <authorList>
            <person name="Chen L.-Q."/>
            <person name="Hou B.-H."/>
            <person name="Lalonde S."/>
            <person name="Takanaga H."/>
            <person name="Hartung M.L."/>
            <person name="Qu X.-Q."/>
            <person name="Guo W.-J."/>
            <person name="Kim J.-G."/>
            <person name="Underwood W."/>
            <person name="Chaudhuri B."/>
            <person name="Chermak D."/>
            <person name="Antony G."/>
            <person name="White F.F."/>
            <person name="Somerville S.C."/>
            <person name="Mudgett M.B."/>
            <person name="Frommer W.B."/>
        </authorList>
    </citation>
    <scope>GENE FAMILY</scope>
    <scope>NOMENCLATURE</scope>
    <source>
        <strain>cv. Columbia</strain>
    </source>
</reference>
<reference key="6">
    <citation type="journal article" date="2013" name="Proc. Natl. Acad. Sci. U.S.A.">
        <title>Functional role of oligomerization for bacterial and plant SWEET sugar transporter family.</title>
        <authorList>
            <person name="Xuan Y.H."/>
            <person name="Hu Y.B."/>
            <person name="Chen L.-Q."/>
            <person name="Sosso D."/>
            <person name="Ducat D.C."/>
            <person name="Hou B.-H."/>
            <person name="Frommer W.B."/>
        </authorList>
    </citation>
    <scope>SUBUNIT</scope>
    <scope>INTERACTION WITH SWEET1; SWEET7; SWEET8; SWEET9 AND SWEET17</scope>
</reference>
<reference key="7">
    <citation type="journal article" date="2013" name="Plant Physiol.">
        <title>Overexpression of the vacuolar sugar carrier AtSWEET16 modifies germination, growth, and stress tolerance in Arabidopsis.</title>
        <authorList>
            <person name="Klemens P.A."/>
            <person name="Patzke K."/>
            <person name="Deitmer J."/>
            <person name="Spinner L."/>
            <person name="Le Hir R."/>
            <person name="Bellini C."/>
            <person name="Bedu M."/>
            <person name="Chardon F."/>
            <person name="Krapp A."/>
            <person name="Neuhaus H.E."/>
        </authorList>
    </citation>
    <scope>FUNCTION</scope>
    <scope>TISSUE SPECIFICITY</scope>
    <scope>INDUCTION BY SUGARS AND OSMOTIC STRESSES</scope>
    <scope>SUBCELLULAR LOCATION</scope>
    <scope>BIOPHYSICOCHEMICAL PROPERTIES</scope>
</reference>
<reference key="8">
    <citation type="journal article" date="2014" name="Plant Physiol.">
        <title>SWEET17, a facilitative transporter, mediates fructose transport across the tonoplast of Arabidopsis roots and leaves.</title>
        <authorList>
            <person name="Guo W.-J."/>
            <person name="Nagy R."/>
            <person name="Chen H.-Y."/>
            <person name="Pfrunder S."/>
            <person name="Yu Y.-C."/>
            <person name="Santelia D."/>
            <person name="Frommer W.B."/>
            <person name="Martinoia E."/>
        </authorList>
    </citation>
    <scope>FUNCTION</scope>
    <scope>DISRUPTION PHENOTYPE</scope>
    <scope>TISSUE SPECIFICITY</scope>
    <scope>SUBCELLULAR LOCATION</scope>
    <source>
        <strain>cv. Columbia</strain>
    </source>
</reference>
<reference key="9">
    <citation type="journal article" date="2015" name="Curr. Opin. Plant Biol.">
        <title>SWEETs, transporters for intracellular and intercellular sugar translocation.</title>
        <authorList>
            <person name="Eom J.-S."/>
            <person name="Chen L.-Q."/>
            <person name="Sosso D."/>
            <person name="Julius B.T."/>
            <person name="Lin I.W."/>
            <person name="Qu X.-Q."/>
            <person name="Braun D.M."/>
            <person name="Frommer W.B."/>
        </authorList>
    </citation>
    <scope>REVIEW</scope>
    <source>
        <strain>cv. Columbia</strain>
    </source>
</reference>
<gene>
    <name evidence="6" type="primary">SWEET16</name>
    <name type="ordered locus">At3g16690</name>
    <name type="ORF">MGL6.16</name>
</gene>
<comment type="function">
    <text evidence="4 5 7">Mediates both low-affinity uptake and efflux of sugar across the vacuolar membrane. Regulates sugars homeostasis in leaves and roots by exporting/importing them through the tonoplast regarding metabolic demand (PubMed:24028846). Acts as a vacuolar hexose transporter, such as glucose (Glc), fructose (Fru), and sucrose (Suc) (PubMed:24028846, PubMed:24381066, PubMed:25988582).</text>
</comment>
<comment type="biophysicochemical properties">
    <kinetics>
        <KM evidence="4">9.9 mM for glucose</KM>
        <KM evidence="4">15.7 mM for fructose</KM>
        <KM evidence="4">10.8 mM for sucrose</KM>
        <text evidence="4">Vmax with glucose as substrate is 0.68 nmol/hour/Xenopus laevis oocyte. Vmax with fructose as substrate is 0.27 nmol/hour/Xenopus laevis oocyte. Vmax with sucrose as substrate is 0.14 nmol/hour/Xenopus laevis oocyte.</text>
    </kinetics>
</comment>
<comment type="subunit">
    <text evidence="3">Forms homooligomers and heterooligomers with SWEET1, SWEET7, SWEET8, SWEET9 and SWEET17.</text>
</comment>
<comment type="subcellular location">
    <subcellularLocation>
        <location evidence="4 5 7">Vacuole membrane</location>
        <topology evidence="1">Multi-pass membrane protein</topology>
    </subcellularLocation>
</comment>
<comment type="tissue specificity">
    <text evidence="4 5">Mostly expressed in the cortex of mature roots, and, to a lower extent, in aerial organs such as leaves, stems, and flowers (PubMed:24381066). Mainly present in vascular parenchyma cells, especially in the petiole vasculature, flower stalks and at the base of individual, not fully developed flowers (PubMed:24028846).</text>
</comment>
<comment type="induction">
    <text evidence="4">Induced by nitrogen. Repressed by glucose (Glc), fructose (Fru), sucrose (Suc), cold, osmotic stress, and nitrogen starvation.</text>
</comment>
<comment type="disruption phenotype">
    <text evidence="5">Increased root sensitivity to high levels of fructose.</text>
</comment>
<comment type="similarity">
    <text evidence="8">Belongs to the SWEET sugar transporter family.</text>
</comment>
<sequence>MADLSFYVGVIGNVISVLVFLSPVETFWRIVQRRSTEEYECFPYICTLMSSSLWTYYGIVTPGEYLVSTVNGFGALAESIYVLIFLFFVPKSRFLKTVVVVLALNVCFPVIAIAGTRTLFGDANSRSSSMGFICATLNIIMYGSPLSAIKTVVTTRSVQFMPFWLSFFLFLNGAIWGVYALLLHDMFLLVPNGMGFFLGIMQLLIYAYYRNAEPIVEDEEGLIPNQPLLA</sequence>
<proteinExistence type="evidence at protein level"/>
<dbReference type="EMBL" id="AB022217">
    <property type="protein sequence ID" value="BAB02761.1"/>
    <property type="molecule type" value="Genomic_DNA"/>
</dbReference>
<dbReference type="EMBL" id="CP002686">
    <property type="protein sequence ID" value="AEE75852.1"/>
    <property type="molecule type" value="Genomic_DNA"/>
</dbReference>
<dbReference type="EMBL" id="BT010528">
    <property type="protein sequence ID" value="AAQ65151.1"/>
    <property type="molecule type" value="mRNA"/>
</dbReference>
<dbReference type="EMBL" id="AK222159">
    <property type="protein sequence ID" value="BAD95254.1"/>
    <property type="molecule type" value="mRNA"/>
</dbReference>
<dbReference type="RefSeq" id="NP_001319571.1">
    <property type="nucleotide sequence ID" value="NM_001338249.1"/>
</dbReference>
<dbReference type="SMR" id="Q9LUR4"/>
<dbReference type="BioGRID" id="6255">
    <property type="interactions" value="12"/>
</dbReference>
<dbReference type="FunCoup" id="Q9LUR4">
    <property type="interactions" value="450"/>
</dbReference>
<dbReference type="IntAct" id="Q9LUR4">
    <property type="interactions" value="6"/>
</dbReference>
<dbReference type="STRING" id="3702.Q9LUR4"/>
<dbReference type="TCDB" id="2.A.123.1.23">
    <property type="family name" value="the sweet, pq-loop, saliva, mtn3 (sweet) family"/>
</dbReference>
<dbReference type="GlyGen" id="Q9LUR4">
    <property type="glycosylation" value="1 site"/>
</dbReference>
<dbReference type="PaxDb" id="3702-AT3G16690.1"/>
<dbReference type="EnsemblPlants" id="AT3G16690.1">
    <property type="protein sequence ID" value="AT3G16690.1"/>
    <property type="gene ID" value="AT3G16690"/>
</dbReference>
<dbReference type="GeneID" id="820921"/>
<dbReference type="Gramene" id="AT3G16690.1">
    <property type="protein sequence ID" value="AT3G16690.1"/>
    <property type="gene ID" value="AT3G16690"/>
</dbReference>
<dbReference type="KEGG" id="ath:AT3G16690"/>
<dbReference type="Araport" id="AT3G16690"/>
<dbReference type="TAIR" id="AT3G16690">
    <property type="gene designation" value="SWEET16"/>
</dbReference>
<dbReference type="eggNOG" id="KOG1623">
    <property type="taxonomic scope" value="Eukaryota"/>
</dbReference>
<dbReference type="HOGENOM" id="CLU_048643_4_1_1"/>
<dbReference type="InParanoid" id="Q9LUR4"/>
<dbReference type="PhylomeDB" id="Q9LUR4"/>
<dbReference type="PRO" id="PR:Q9LUR4"/>
<dbReference type="Proteomes" id="UP000006548">
    <property type="component" value="Chromosome 3"/>
</dbReference>
<dbReference type="ExpressionAtlas" id="Q9LUR4">
    <property type="expression patterns" value="baseline and differential"/>
</dbReference>
<dbReference type="GO" id="GO:0009705">
    <property type="term" value="C:plant-type vacuole membrane"/>
    <property type="evidence" value="ECO:0000314"/>
    <property type="project" value="UniProtKB"/>
</dbReference>
<dbReference type="GO" id="GO:0005886">
    <property type="term" value="C:plasma membrane"/>
    <property type="evidence" value="ECO:0000250"/>
    <property type="project" value="UniProtKB"/>
</dbReference>
<dbReference type="GO" id="GO:0055056">
    <property type="term" value="F:D-glucose transmembrane transporter activity"/>
    <property type="evidence" value="ECO:0000314"/>
    <property type="project" value="UniProtKB"/>
</dbReference>
<dbReference type="GO" id="GO:0005353">
    <property type="term" value="F:fructose transmembrane transporter activity"/>
    <property type="evidence" value="ECO:0000314"/>
    <property type="project" value="UniProtKB"/>
</dbReference>
<dbReference type="GO" id="GO:0008515">
    <property type="term" value="F:sucrose transmembrane transporter activity"/>
    <property type="evidence" value="ECO:0000314"/>
    <property type="project" value="UniProtKB"/>
</dbReference>
<dbReference type="GO" id="GO:0051119">
    <property type="term" value="F:sugar transmembrane transporter activity"/>
    <property type="evidence" value="ECO:0000315"/>
    <property type="project" value="UniProtKB"/>
</dbReference>
<dbReference type="GO" id="GO:0006995">
    <property type="term" value="P:cellular response to nitrogen starvation"/>
    <property type="evidence" value="ECO:0000270"/>
    <property type="project" value="UniProtKB"/>
</dbReference>
<dbReference type="GO" id="GO:1902334">
    <property type="term" value="P:fructose export from vacuole to cytoplasm"/>
    <property type="evidence" value="ECO:0000315"/>
    <property type="project" value="UniProtKB"/>
</dbReference>
<dbReference type="GO" id="GO:0051260">
    <property type="term" value="P:protein homooligomerization"/>
    <property type="evidence" value="ECO:0000314"/>
    <property type="project" value="UniProtKB"/>
</dbReference>
<dbReference type="GO" id="GO:0009409">
    <property type="term" value="P:response to cold"/>
    <property type="evidence" value="ECO:0000270"/>
    <property type="project" value="UniProtKB"/>
</dbReference>
<dbReference type="GO" id="GO:0009750">
    <property type="term" value="P:response to fructose"/>
    <property type="evidence" value="ECO:0000270"/>
    <property type="project" value="UniProtKB"/>
</dbReference>
<dbReference type="GO" id="GO:0009749">
    <property type="term" value="P:response to glucose"/>
    <property type="evidence" value="ECO:0000270"/>
    <property type="project" value="UniProtKB"/>
</dbReference>
<dbReference type="GO" id="GO:0006970">
    <property type="term" value="P:response to osmotic stress"/>
    <property type="evidence" value="ECO:0000270"/>
    <property type="project" value="UniProtKB"/>
</dbReference>
<dbReference type="GO" id="GO:0009744">
    <property type="term" value="P:response to sucrose"/>
    <property type="evidence" value="ECO:0000270"/>
    <property type="project" value="UniProtKB"/>
</dbReference>
<dbReference type="FunFam" id="1.20.1280.290:FF:000001">
    <property type="entry name" value="Bidirectional sugar transporter SWEET"/>
    <property type="match status" value="1"/>
</dbReference>
<dbReference type="FunFam" id="1.20.1280.290:FF:000002">
    <property type="entry name" value="Bidirectional sugar transporter SWEET"/>
    <property type="match status" value="1"/>
</dbReference>
<dbReference type="Gene3D" id="1.20.1280.290">
    <property type="match status" value="2"/>
</dbReference>
<dbReference type="InterPro" id="IPR047664">
    <property type="entry name" value="SWEET"/>
</dbReference>
<dbReference type="InterPro" id="IPR004316">
    <property type="entry name" value="SWEET_rpt"/>
</dbReference>
<dbReference type="PANTHER" id="PTHR10791:SF183">
    <property type="entry name" value="BIDIRECTIONAL SUGAR TRANSPORTER SWEET16"/>
    <property type="match status" value="1"/>
</dbReference>
<dbReference type="PANTHER" id="PTHR10791">
    <property type="entry name" value="RAG1-ACTIVATING PROTEIN 1"/>
    <property type="match status" value="1"/>
</dbReference>
<dbReference type="Pfam" id="PF03083">
    <property type="entry name" value="MtN3_slv"/>
    <property type="match status" value="2"/>
</dbReference>
<protein>
    <recommendedName>
        <fullName evidence="6">Bidirectional sugar transporter SWEET16</fullName>
        <shortName evidence="6">AtSWEET16</shortName>
    </recommendedName>
    <alternativeName>
        <fullName evidence="6">Protein SUGARS WILL EVENTUALLY BE EXPORTED TRANSPORTERS 16</fullName>
    </alternativeName>
</protein>
<name>SWT16_ARATH</name>
<accession>Q9LUR4</accession>
<organism>
    <name type="scientific">Arabidopsis thaliana</name>
    <name type="common">Mouse-ear cress</name>
    <dbReference type="NCBI Taxonomy" id="3702"/>
    <lineage>
        <taxon>Eukaryota</taxon>
        <taxon>Viridiplantae</taxon>
        <taxon>Streptophyta</taxon>
        <taxon>Embryophyta</taxon>
        <taxon>Tracheophyta</taxon>
        <taxon>Spermatophyta</taxon>
        <taxon>Magnoliopsida</taxon>
        <taxon>eudicotyledons</taxon>
        <taxon>Gunneridae</taxon>
        <taxon>Pentapetalae</taxon>
        <taxon>rosids</taxon>
        <taxon>malvids</taxon>
        <taxon>Brassicales</taxon>
        <taxon>Brassicaceae</taxon>
        <taxon>Camelineae</taxon>
        <taxon>Arabidopsis</taxon>
    </lineage>
</organism>
<feature type="chain" id="PRO_0000404116" description="Bidirectional sugar transporter SWEET16">
    <location>
        <begin position="1"/>
        <end position="230"/>
    </location>
</feature>
<feature type="topological domain" description="Extracellular" evidence="2">
    <location>
        <begin position="1"/>
        <end position="3"/>
    </location>
</feature>
<feature type="transmembrane region" description="Helical; Name=1" evidence="2">
    <location>
        <begin position="4"/>
        <end position="24"/>
    </location>
</feature>
<feature type="topological domain" description="Cytoplasmic" evidence="2">
    <location>
        <begin position="25"/>
        <end position="40"/>
    </location>
</feature>
<feature type="transmembrane region" description="Helical; Name=2" evidence="2">
    <location>
        <begin position="41"/>
        <end position="61"/>
    </location>
</feature>
<feature type="topological domain" description="Extracellular" evidence="2">
    <location>
        <begin position="62"/>
        <end position="69"/>
    </location>
</feature>
<feature type="transmembrane region" description="Helical; Name=3" evidence="2">
    <location>
        <begin position="70"/>
        <end position="90"/>
    </location>
</feature>
<feature type="topological domain" description="Cytoplasmic" evidence="2">
    <location>
        <begin position="91"/>
        <end position="93"/>
    </location>
</feature>
<feature type="transmembrane region" description="Helical; Name=4" evidence="2">
    <location>
        <begin position="94"/>
        <end position="114"/>
    </location>
</feature>
<feature type="topological domain" description="Extracellular" evidence="2">
    <location>
        <begin position="115"/>
        <end position="128"/>
    </location>
</feature>
<feature type="transmembrane region" description="Helical; Name=5" evidence="2">
    <location>
        <begin position="129"/>
        <end position="149"/>
    </location>
</feature>
<feature type="topological domain" description="Cytoplasmic" evidence="2">
    <location>
        <begin position="150"/>
        <end position="162"/>
    </location>
</feature>
<feature type="transmembrane region" description="Helical; Name=6" evidence="2">
    <location>
        <begin position="163"/>
        <end position="183"/>
    </location>
</feature>
<feature type="topological domain" description="Extracellular" evidence="2">
    <location>
        <begin position="184"/>
        <end position="185"/>
    </location>
</feature>
<feature type="transmembrane region" description="Helical; Name=7" evidence="2">
    <location>
        <begin position="186"/>
        <end position="206"/>
    </location>
</feature>
<feature type="topological domain" description="Cytoplasmic" evidence="2">
    <location>
        <begin position="207"/>
        <end position="230"/>
    </location>
</feature>
<feature type="domain" description="MtN3/slv 1">
    <location>
        <begin position="6"/>
        <end position="92"/>
    </location>
</feature>
<feature type="domain" description="MtN3/slv 2">
    <location>
        <begin position="129"/>
        <end position="212"/>
    </location>
</feature>
<keyword id="KW-0472">Membrane</keyword>
<keyword id="KW-1185">Reference proteome</keyword>
<keyword id="KW-0677">Repeat</keyword>
<keyword id="KW-0762">Sugar transport</keyword>
<keyword id="KW-0812">Transmembrane</keyword>
<keyword id="KW-1133">Transmembrane helix</keyword>
<keyword id="KW-0813">Transport</keyword>
<keyword id="KW-0926">Vacuole</keyword>